<name>TPIS_SYNS9</name>
<keyword id="KW-0963">Cytoplasm</keyword>
<keyword id="KW-0312">Gluconeogenesis</keyword>
<keyword id="KW-0324">Glycolysis</keyword>
<keyword id="KW-0413">Isomerase</keyword>
<keyword id="KW-1185">Reference proteome</keyword>
<gene>
    <name evidence="1" type="primary">tpiA</name>
    <name type="ordered locus">Syncc9902_0830</name>
</gene>
<dbReference type="EC" id="5.3.1.1" evidence="1"/>
<dbReference type="EMBL" id="CP000097">
    <property type="protein sequence ID" value="ABB25796.1"/>
    <property type="molecule type" value="Genomic_DNA"/>
</dbReference>
<dbReference type="RefSeq" id="WP_011359635.1">
    <property type="nucleotide sequence ID" value="NC_007513.1"/>
</dbReference>
<dbReference type="SMR" id="Q3AYN1"/>
<dbReference type="STRING" id="316279.Syncc9902_0830"/>
<dbReference type="KEGG" id="sye:Syncc9902_0830"/>
<dbReference type="eggNOG" id="COG0149">
    <property type="taxonomic scope" value="Bacteria"/>
</dbReference>
<dbReference type="HOGENOM" id="CLU_024251_2_3_3"/>
<dbReference type="OrthoDB" id="9809429at2"/>
<dbReference type="UniPathway" id="UPA00109">
    <property type="reaction ID" value="UER00189"/>
</dbReference>
<dbReference type="UniPathway" id="UPA00138"/>
<dbReference type="Proteomes" id="UP000002712">
    <property type="component" value="Chromosome"/>
</dbReference>
<dbReference type="GO" id="GO:0005829">
    <property type="term" value="C:cytosol"/>
    <property type="evidence" value="ECO:0007669"/>
    <property type="project" value="TreeGrafter"/>
</dbReference>
<dbReference type="GO" id="GO:0004807">
    <property type="term" value="F:triose-phosphate isomerase activity"/>
    <property type="evidence" value="ECO:0007669"/>
    <property type="project" value="UniProtKB-UniRule"/>
</dbReference>
<dbReference type="GO" id="GO:0006094">
    <property type="term" value="P:gluconeogenesis"/>
    <property type="evidence" value="ECO:0007669"/>
    <property type="project" value="UniProtKB-UniRule"/>
</dbReference>
<dbReference type="GO" id="GO:0046166">
    <property type="term" value="P:glyceraldehyde-3-phosphate biosynthetic process"/>
    <property type="evidence" value="ECO:0007669"/>
    <property type="project" value="TreeGrafter"/>
</dbReference>
<dbReference type="GO" id="GO:0019563">
    <property type="term" value="P:glycerol catabolic process"/>
    <property type="evidence" value="ECO:0007669"/>
    <property type="project" value="TreeGrafter"/>
</dbReference>
<dbReference type="GO" id="GO:0006096">
    <property type="term" value="P:glycolytic process"/>
    <property type="evidence" value="ECO:0007669"/>
    <property type="project" value="UniProtKB-UniRule"/>
</dbReference>
<dbReference type="CDD" id="cd00311">
    <property type="entry name" value="TIM"/>
    <property type="match status" value="1"/>
</dbReference>
<dbReference type="FunFam" id="3.20.20.70:FF:000016">
    <property type="entry name" value="Triosephosphate isomerase"/>
    <property type="match status" value="1"/>
</dbReference>
<dbReference type="Gene3D" id="3.20.20.70">
    <property type="entry name" value="Aldolase class I"/>
    <property type="match status" value="1"/>
</dbReference>
<dbReference type="HAMAP" id="MF_00147_B">
    <property type="entry name" value="TIM_B"/>
    <property type="match status" value="1"/>
</dbReference>
<dbReference type="InterPro" id="IPR013785">
    <property type="entry name" value="Aldolase_TIM"/>
</dbReference>
<dbReference type="InterPro" id="IPR035990">
    <property type="entry name" value="TIM_sf"/>
</dbReference>
<dbReference type="InterPro" id="IPR022896">
    <property type="entry name" value="TrioseP_Isoase_bac/euk"/>
</dbReference>
<dbReference type="InterPro" id="IPR000652">
    <property type="entry name" value="Triosephosphate_isomerase"/>
</dbReference>
<dbReference type="InterPro" id="IPR020861">
    <property type="entry name" value="Triosephosphate_isomerase_AS"/>
</dbReference>
<dbReference type="NCBIfam" id="TIGR00419">
    <property type="entry name" value="tim"/>
    <property type="match status" value="1"/>
</dbReference>
<dbReference type="PANTHER" id="PTHR21139">
    <property type="entry name" value="TRIOSEPHOSPHATE ISOMERASE"/>
    <property type="match status" value="1"/>
</dbReference>
<dbReference type="PANTHER" id="PTHR21139:SF42">
    <property type="entry name" value="TRIOSEPHOSPHATE ISOMERASE"/>
    <property type="match status" value="1"/>
</dbReference>
<dbReference type="Pfam" id="PF00121">
    <property type="entry name" value="TIM"/>
    <property type="match status" value="1"/>
</dbReference>
<dbReference type="SUPFAM" id="SSF51351">
    <property type="entry name" value="Triosephosphate isomerase (TIM)"/>
    <property type="match status" value="1"/>
</dbReference>
<dbReference type="PROSITE" id="PS00171">
    <property type="entry name" value="TIM_1"/>
    <property type="match status" value="1"/>
</dbReference>
<dbReference type="PROSITE" id="PS51440">
    <property type="entry name" value="TIM_2"/>
    <property type="match status" value="1"/>
</dbReference>
<organism>
    <name type="scientific">Synechococcus sp. (strain CC9902)</name>
    <dbReference type="NCBI Taxonomy" id="316279"/>
    <lineage>
        <taxon>Bacteria</taxon>
        <taxon>Bacillati</taxon>
        <taxon>Cyanobacteriota</taxon>
        <taxon>Cyanophyceae</taxon>
        <taxon>Synechococcales</taxon>
        <taxon>Synechococcaceae</taxon>
        <taxon>Synechococcus</taxon>
    </lineage>
</organism>
<proteinExistence type="inferred from homology"/>
<accession>Q3AYN1</accession>
<comment type="function">
    <text evidence="1">Involved in the gluconeogenesis. Catalyzes stereospecifically the conversion of dihydroxyacetone phosphate (DHAP) to D-glyceraldehyde-3-phosphate (G3P).</text>
</comment>
<comment type="catalytic activity">
    <reaction evidence="1">
        <text>D-glyceraldehyde 3-phosphate = dihydroxyacetone phosphate</text>
        <dbReference type="Rhea" id="RHEA:18585"/>
        <dbReference type="ChEBI" id="CHEBI:57642"/>
        <dbReference type="ChEBI" id="CHEBI:59776"/>
        <dbReference type="EC" id="5.3.1.1"/>
    </reaction>
</comment>
<comment type="pathway">
    <text evidence="1">Carbohydrate biosynthesis; gluconeogenesis.</text>
</comment>
<comment type="pathway">
    <text evidence="1">Carbohydrate degradation; glycolysis; D-glyceraldehyde 3-phosphate from glycerone phosphate: step 1/1.</text>
</comment>
<comment type="subunit">
    <text evidence="1">Homodimer.</text>
</comment>
<comment type="subcellular location">
    <subcellularLocation>
        <location evidence="1">Cytoplasm</location>
    </subcellularLocation>
</comment>
<comment type="similarity">
    <text evidence="1">Belongs to the triosephosphate isomerase family.</text>
</comment>
<protein>
    <recommendedName>
        <fullName evidence="1">Triosephosphate isomerase</fullName>
        <shortName evidence="1">TIM</shortName>
        <shortName evidence="1">TPI</shortName>
        <ecNumber evidence="1">5.3.1.1</ecNumber>
    </recommendedName>
    <alternativeName>
        <fullName evidence="1">Triose-phosphate isomerase</fullName>
    </alternativeName>
</protein>
<evidence type="ECO:0000255" key="1">
    <source>
        <dbReference type="HAMAP-Rule" id="MF_00147"/>
    </source>
</evidence>
<sequence>MRRPVIAGNWKMHMTCAQAREFMAAFLPLVADMPNDRDLVLAPPFTALSSMADLCKDSPIALSSQNVHWEGSGAFTGEISPSMLKEHGVTYTIVGHSEPRKYFSESDEQINHRARSSQANGLIPIVCVGETDEQRERGEAERVIRRQIEQGLEGLDADLLVVAYEPIWAIGTGKTCEAAEANRICGLIRSWVGSPDLVIQYGGSVKGGNIDELMGMSDIDGVLVGGASLQPDGFARIANYNVA</sequence>
<feature type="chain" id="PRO_0000307585" description="Triosephosphate isomerase">
    <location>
        <begin position="1"/>
        <end position="243"/>
    </location>
</feature>
<feature type="active site" description="Electrophile" evidence="1">
    <location>
        <position position="96"/>
    </location>
</feature>
<feature type="active site" description="Proton acceptor" evidence="1">
    <location>
        <position position="165"/>
    </location>
</feature>
<feature type="binding site" evidence="1">
    <location>
        <begin position="9"/>
        <end position="11"/>
    </location>
    <ligand>
        <name>substrate</name>
    </ligand>
</feature>
<feature type="binding site" evidence="1">
    <location>
        <position position="171"/>
    </location>
    <ligand>
        <name>substrate</name>
    </ligand>
</feature>
<feature type="binding site" evidence="1">
    <location>
        <position position="204"/>
    </location>
    <ligand>
        <name>substrate</name>
    </ligand>
</feature>
<feature type="binding site" evidence="1">
    <location>
        <begin position="225"/>
        <end position="226"/>
    </location>
    <ligand>
        <name>substrate</name>
    </ligand>
</feature>
<reference key="1">
    <citation type="submission" date="2005-08" db="EMBL/GenBank/DDBJ databases">
        <title>Complete sequence of Synechococcus sp. CC9902.</title>
        <authorList>
            <person name="Copeland A."/>
            <person name="Lucas S."/>
            <person name="Lapidus A."/>
            <person name="Barry K."/>
            <person name="Detter J.C."/>
            <person name="Glavina T."/>
            <person name="Hammon N."/>
            <person name="Israni S."/>
            <person name="Pitluck S."/>
            <person name="Martinez M."/>
            <person name="Schmutz J."/>
            <person name="Larimer F."/>
            <person name="Land M."/>
            <person name="Kyrpides N."/>
            <person name="Ivanova N."/>
            <person name="Richardson P."/>
        </authorList>
    </citation>
    <scope>NUCLEOTIDE SEQUENCE [LARGE SCALE GENOMIC DNA]</scope>
    <source>
        <strain>CC9902</strain>
    </source>
</reference>